<evidence type="ECO:0000255" key="1">
    <source>
        <dbReference type="HAMAP-Rule" id="MF_01326"/>
    </source>
</evidence>
<evidence type="ECO:0000305" key="2"/>
<keyword id="KW-0687">Ribonucleoprotein</keyword>
<keyword id="KW-0689">Ribosomal protein</keyword>
<keyword id="KW-0694">RNA-binding</keyword>
<keyword id="KW-0699">rRNA-binding</keyword>
<organism>
    <name type="scientific">Pyrobaculum arsenaticum (strain DSM 13514 / JCM 11321 / PZ6)</name>
    <dbReference type="NCBI Taxonomy" id="340102"/>
    <lineage>
        <taxon>Archaea</taxon>
        <taxon>Thermoproteota</taxon>
        <taxon>Thermoprotei</taxon>
        <taxon>Thermoproteales</taxon>
        <taxon>Thermoproteaceae</taxon>
        <taxon>Pyrobaculum</taxon>
    </lineage>
</organism>
<dbReference type="EMBL" id="CP000660">
    <property type="protein sequence ID" value="ABP51280.1"/>
    <property type="molecule type" value="Genomic_DNA"/>
</dbReference>
<dbReference type="SMR" id="A4WLL3"/>
<dbReference type="STRING" id="340102.Pars_1729"/>
<dbReference type="KEGG" id="pas:Pars_1729"/>
<dbReference type="HOGENOM" id="CLU_093240_2_1_2"/>
<dbReference type="OrthoDB" id="10899at2157"/>
<dbReference type="PhylomeDB" id="A4WLL3"/>
<dbReference type="Proteomes" id="UP000001567">
    <property type="component" value="Chromosome"/>
</dbReference>
<dbReference type="GO" id="GO:0015934">
    <property type="term" value="C:large ribosomal subunit"/>
    <property type="evidence" value="ECO:0007669"/>
    <property type="project" value="InterPro"/>
</dbReference>
<dbReference type="GO" id="GO:0019843">
    <property type="term" value="F:rRNA binding"/>
    <property type="evidence" value="ECO:0007669"/>
    <property type="project" value="UniProtKB-UniRule"/>
</dbReference>
<dbReference type="GO" id="GO:0003735">
    <property type="term" value="F:structural constituent of ribosome"/>
    <property type="evidence" value="ECO:0007669"/>
    <property type="project" value="InterPro"/>
</dbReference>
<dbReference type="GO" id="GO:0006412">
    <property type="term" value="P:translation"/>
    <property type="evidence" value="ECO:0007669"/>
    <property type="project" value="UniProtKB-UniRule"/>
</dbReference>
<dbReference type="CDD" id="cd06089">
    <property type="entry name" value="KOW_RPL26"/>
    <property type="match status" value="1"/>
</dbReference>
<dbReference type="FunFam" id="2.30.30.30:FF:000009">
    <property type="entry name" value="60S ribosomal protein L26"/>
    <property type="match status" value="1"/>
</dbReference>
<dbReference type="Gene3D" id="2.30.30.30">
    <property type="match status" value="1"/>
</dbReference>
<dbReference type="HAMAP" id="MF_01326_A">
    <property type="entry name" value="Ribosomal_uL24_A"/>
    <property type="match status" value="1"/>
</dbReference>
<dbReference type="InterPro" id="IPR005824">
    <property type="entry name" value="KOW"/>
</dbReference>
<dbReference type="InterPro" id="IPR014722">
    <property type="entry name" value="Rib_uL2_dom2"/>
</dbReference>
<dbReference type="InterPro" id="IPR005825">
    <property type="entry name" value="Ribosomal_uL24_CS"/>
</dbReference>
<dbReference type="InterPro" id="IPR005756">
    <property type="entry name" value="Ribosomal_uL24_euk/arc"/>
</dbReference>
<dbReference type="InterPro" id="IPR041988">
    <property type="entry name" value="Ribosomal_uL24_KOW"/>
</dbReference>
<dbReference type="InterPro" id="IPR008991">
    <property type="entry name" value="Translation_prot_SH3-like_sf"/>
</dbReference>
<dbReference type="NCBIfam" id="TIGR01080">
    <property type="entry name" value="rplX_A_E"/>
    <property type="match status" value="1"/>
</dbReference>
<dbReference type="PANTHER" id="PTHR11143">
    <property type="entry name" value="60S RIBOSOMAL PROTEIN L26 FAMILY MEMBER"/>
    <property type="match status" value="1"/>
</dbReference>
<dbReference type="Pfam" id="PF00467">
    <property type="entry name" value="KOW"/>
    <property type="match status" value="1"/>
</dbReference>
<dbReference type="Pfam" id="PF16906">
    <property type="entry name" value="Ribosomal_L26"/>
    <property type="match status" value="1"/>
</dbReference>
<dbReference type="SMART" id="SM00739">
    <property type="entry name" value="KOW"/>
    <property type="match status" value="1"/>
</dbReference>
<dbReference type="SUPFAM" id="SSF50104">
    <property type="entry name" value="Translation proteins SH3-like domain"/>
    <property type="match status" value="1"/>
</dbReference>
<dbReference type="PROSITE" id="PS01108">
    <property type="entry name" value="RIBOSOMAL_L24"/>
    <property type="match status" value="1"/>
</dbReference>
<name>RL24_PYRAR</name>
<feature type="chain" id="PRO_1000052284" description="Large ribosomal subunit protein uL24">
    <location>
        <begin position="1"/>
        <end position="122"/>
    </location>
</feature>
<proteinExistence type="inferred from homology"/>
<sequence>MPITTSAQPRKQRLALFNAPLHLRHKLFNAKLSPELEKKLGVKRLPVRRGDTVMILRGDFKGVTGKVVRVDLKKVRIYVEGATRTNSRGQTVYYPIHPSKVMIVDVDMSDKARQKIIERRKK</sequence>
<accession>A4WLL3</accession>
<protein>
    <recommendedName>
        <fullName evidence="1">Large ribosomal subunit protein uL24</fullName>
    </recommendedName>
    <alternativeName>
        <fullName evidence="2">50S ribosomal protein L24</fullName>
    </alternativeName>
</protein>
<reference key="1">
    <citation type="submission" date="2007-04" db="EMBL/GenBank/DDBJ databases">
        <title>Complete sequence of Pyrobaculum arsenaticum DSM 13514.</title>
        <authorList>
            <consortium name="US DOE Joint Genome Institute"/>
            <person name="Copeland A."/>
            <person name="Lucas S."/>
            <person name="Lapidus A."/>
            <person name="Barry K."/>
            <person name="Glavina del Rio T."/>
            <person name="Dalin E."/>
            <person name="Tice H."/>
            <person name="Pitluck S."/>
            <person name="Chain P."/>
            <person name="Malfatti S."/>
            <person name="Shin M."/>
            <person name="Vergez L."/>
            <person name="Schmutz J."/>
            <person name="Larimer F."/>
            <person name="Land M."/>
            <person name="Hauser L."/>
            <person name="Kyrpides N."/>
            <person name="Mikhailova N."/>
            <person name="Cozen A.E."/>
            <person name="Fitz-Gibbon S.T."/>
            <person name="House C.H."/>
            <person name="Saltikov C."/>
            <person name="Lowe T.M."/>
            <person name="Richardson P."/>
        </authorList>
    </citation>
    <scope>NUCLEOTIDE SEQUENCE [LARGE SCALE GENOMIC DNA]</scope>
    <source>
        <strain>ATCC 700994 / DSM 13514 / JCM 11321 / PZ6</strain>
    </source>
</reference>
<comment type="function">
    <text evidence="1">One of two assembly initiator proteins, it binds directly to the 5'-end of the 23S rRNA, where it nucleates assembly of the 50S subunit.</text>
</comment>
<comment type="function">
    <text evidence="1">Located at the polypeptide exit tunnel on the outside of the subunit.</text>
</comment>
<comment type="subunit">
    <text evidence="1">Part of the 50S ribosomal subunit.</text>
</comment>
<comment type="similarity">
    <text evidence="1">Belongs to the universal ribosomal protein uL24 family.</text>
</comment>
<gene>
    <name evidence="1" type="primary">rpl24</name>
    <name type="ordered locus">Pars_1729</name>
</gene>